<organism>
    <name type="scientific">Methylococcus capsulatus (strain ATCC 33009 / NCIMB 11132 / Bath)</name>
    <dbReference type="NCBI Taxonomy" id="243233"/>
    <lineage>
        <taxon>Bacteria</taxon>
        <taxon>Pseudomonadati</taxon>
        <taxon>Pseudomonadota</taxon>
        <taxon>Gammaproteobacteria</taxon>
        <taxon>Methylococcales</taxon>
        <taxon>Methylococcaceae</taxon>
        <taxon>Methylococcus</taxon>
    </lineage>
</organism>
<keyword id="KW-0963">Cytoplasm</keyword>
<keyword id="KW-1185">Reference proteome</keyword>
<keyword id="KW-0694">RNA-binding</keyword>
<evidence type="ECO:0000255" key="1">
    <source>
        <dbReference type="HAMAP-Rule" id="MF_00023"/>
    </source>
</evidence>
<evidence type="ECO:0000256" key="2">
    <source>
        <dbReference type="SAM" id="MobiDB-lite"/>
    </source>
</evidence>
<gene>
    <name evidence="1" type="primary">smpB</name>
    <name type="ordered locus">MCA2620</name>
</gene>
<protein>
    <recommendedName>
        <fullName evidence="1">SsrA-binding protein</fullName>
    </recommendedName>
    <alternativeName>
        <fullName evidence="1">Small protein B</fullName>
    </alternativeName>
</protein>
<name>SSRP_METCA</name>
<sequence length="157" mass="17931">MSSKKSAPGSANIAQNRQATHEYFIEERLEAGLVLEGWEVKSLRAGKAQLKESFVMLKNGEAWLFGAHFSPLPSASTHVQPDPTRSRKLLLHAEELSRLIGQVERKGYTLVPLSLYWKQGRAKLEIGLARGKKQHDKRAAEKERDWEREKQRVMRRG</sequence>
<feature type="chain" id="PRO_0000102978" description="SsrA-binding protein">
    <location>
        <begin position="1"/>
        <end position="157"/>
    </location>
</feature>
<feature type="region of interest" description="Disordered" evidence="2">
    <location>
        <begin position="128"/>
        <end position="157"/>
    </location>
</feature>
<feature type="compositionally biased region" description="Basic and acidic residues" evidence="2">
    <location>
        <begin position="137"/>
        <end position="157"/>
    </location>
</feature>
<proteinExistence type="inferred from homology"/>
<dbReference type="EMBL" id="AE017282">
    <property type="protein sequence ID" value="AAU91279.1"/>
    <property type="molecule type" value="Genomic_DNA"/>
</dbReference>
<dbReference type="RefSeq" id="WP_010961833.1">
    <property type="nucleotide sequence ID" value="NC_002977.6"/>
</dbReference>
<dbReference type="SMR" id="Q604C6"/>
<dbReference type="STRING" id="243233.MCA2620"/>
<dbReference type="GeneID" id="88224802"/>
<dbReference type="KEGG" id="mca:MCA2620"/>
<dbReference type="eggNOG" id="COG0691">
    <property type="taxonomic scope" value="Bacteria"/>
</dbReference>
<dbReference type="HOGENOM" id="CLU_108953_3_0_6"/>
<dbReference type="Proteomes" id="UP000006821">
    <property type="component" value="Chromosome"/>
</dbReference>
<dbReference type="GO" id="GO:0005829">
    <property type="term" value="C:cytosol"/>
    <property type="evidence" value="ECO:0007669"/>
    <property type="project" value="TreeGrafter"/>
</dbReference>
<dbReference type="GO" id="GO:0003723">
    <property type="term" value="F:RNA binding"/>
    <property type="evidence" value="ECO:0007669"/>
    <property type="project" value="UniProtKB-UniRule"/>
</dbReference>
<dbReference type="GO" id="GO:0070929">
    <property type="term" value="P:trans-translation"/>
    <property type="evidence" value="ECO:0007669"/>
    <property type="project" value="UniProtKB-UniRule"/>
</dbReference>
<dbReference type="CDD" id="cd09294">
    <property type="entry name" value="SmpB"/>
    <property type="match status" value="1"/>
</dbReference>
<dbReference type="Gene3D" id="2.40.280.10">
    <property type="match status" value="1"/>
</dbReference>
<dbReference type="HAMAP" id="MF_00023">
    <property type="entry name" value="SmpB"/>
    <property type="match status" value="1"/>
</dbReference>
<dbReference type="InterPro" id="IPR023620">
    <property type="entry name" value="SmpB"/>
</dbReference>
<dbReference type="InterPro" id="IPR000037">
    <property type="entry name" value="SsrA-bd_prot"/>
</dbReference>
<dbReference type="InterPro" id="IPR020081">
    <property type="entry name" value="SsrA-bd_prot_CS"/>
</dbReference>
<dbReference type="NCBIfam" id="NF003843">
    <property type="entry name" value="PRK05422.1"/>
    <property type="match status" value="1"/>
</dbReference>
<dbReference type="NCBIfam" id="TIGR00086">
    <property type="entry name" value="smpB"/>
    <property type="match status" value="1"/>
</dbReference>
<dbReference type="PANTHER" id="PTHR30308:SF2">
    <property type="entry name" value="SSRA-BINDING PROTEIN"/>
    <property type="match status" value="1"/>
</dbReference>
<dbReference type="PANTHER" id="PTHR30308">
    <property type="entry name" value="TMRNA-BINDING COMPONENT OF TRANS-TRANSLATION TAGGING COMPLEX"/>
    <property type="match status" value="1"/>
</dbReference>
<dbReference type="Pfam" id="PF01668">
    <property type="entry name" value="SmpB"/>
    <property type="match status" value="1"/>
</dbReference>
<dbReference type="SUPFAM" id="SSF74982">
    <property type="entry name" value="Small protein B (SmpB)"/>
    <property type="match status" value="1"/>
</dbReference>
<dbReference type="PROSITE" id="PS01317">
    <property type="entry name" value="SSRP"/>
    <property type="match status" value="1"/>
</dbReference>
<comment type="function">
    <text evidence="1">Required for rescue of stalled ribosomes mediated by trans-translation. Binds to transfer-messenger RNA (tmRNA), required for stable association of tmRNA with ribosomes. tmRNA and SmpB together mimic tRNA shape, replacing the anticodon stem-loop with SmpB. tmRNA is encoded by the ssrA gene; the 2 termini fold to resemble tRNA(Ala) and it encodes a 'tag peptide', a short internal open reading frame. During trans-translation Ala-aminoacylated tmRNA acts like a tRNA, entering the A-site of stalled ribosomes, displacing the stalled mRNA. The ribosome then switches to translate the ORF on the tmRNA; the nascent peptide is terminated with the 'tag peptide' encoded by the tmRNA and targeted for degradation. The ribosome is freed to recommence translation, which seems to be the essential function of trans-translation.</text>
</comment>
<comment type="subcellular location">
    <subcellularLocation>
        <location evidence="1">Cytoplasm</location>
    </subcellularLocation>
    <text evidence="1">The tmRNA-SmpB complex associates with stalled 70S ribosomes.</text>
</comment>
<comment type="similarity">
    <text evidence="1">Belongs to the SmpB family.</text>
</comment>
<accession>Q604C6</accession>
<reference key="1">
    <citation type="journal article" date="2004" name="PLoS Biol.">
        <title>Genomic insights into methanotrophy: the complete genome sequence of Methylococcus capsulatus (Bath).</title>
        <authorList>
            <person name="Ward N.L."/>
            <person name="Larsen O."/>
            <person name="Sakwa J."/>
            <person name="Bruseth L."/>
            <person name="Khouri H.M."/>
            <person name="Durkin A.S."/>
            <person name="Dimitrov G."/>
            <person name="Jiang L."/>
            <person name="Scanlan D."/>
            <person name="Kang K.H."/>
            <person name="Lewis M.R."/>
            <person name="Nelson K.E."/>
            <person name="Methe B.A."/>
            <person name="Wu M."/>
            <person name="Heidelberg J.F."/>
            <person name="Paulsen I.T."/>
            <person name="Fouts D.E."/>
            <person name="Ravel J."/>
            <person name="Tettelin H."/>
            <person name="Ren Q."/>
            <person name="Read T.D."/>
            <person name="DeBoy R.T."/>
            <person name="Seshadri R."/>
            <person name="Salzberg S.L."/>
            <person name="Jensen H.B."/>
            <person name="Birkeland N.K."/>
            <person name="Nelson W.C."/>
            <person name="Dodson R.J."/>
            <person name="Grindhaug S.H."/>
            <person name="Holt I.E."/>
            <person name="Eidhammer I."/>
            <person name="Jonasen I."/>
            <person name="Vanaken S."/>
            <person name="Utterback T.R."/>
            <person name="Feldblyum T.V."/>
            <person name="Fraser C.M."/>
            <person name="Lillehaug J.R."/>
            <person name="Eisen J.A."/>
        </authorList>
    </citation>
    <scope>NUCLEOTIDE SEQUENCE [LARGE SCALE GENOMIC DNA]</scope>
    <source>
        <strain>ATCC 33009 / NCIMB 11132 / Bath</strain>
    </source>
</reference>